<reference key="1">
    <citation type="journal article" date="2008" name="J. Bacteriol.">
        <title>Comparative genome analysis of 'Candidatus Phytoplasma australiense' (subgroup tuf-Australia I; rp-A) and 'Ca. Phytoplasma asteris' strains OY-M and AY-WB.</title>
        <authorList>
            <person name="Tran-Nguyen L.T."/>
            <person name="Kube M."/>
            <person name="Schneider B."/>
            <person name="Reinhardt R."/>
            <person name="Gibb K.S."/>
        </authorList>
    </citation>
    <scope>NUCLEOTIDE SEQUENCE [LARGE SCALE GENOMIC DNA]</scope>
</reference>
<name>RL18_PHYAS</name>
<dbReference type="EMBL" id="AM422018">
    <property type="protein sequence ID" value="CAM11905.1"/>
    <property type="molecule type" value="Genomic_DNA"/>
</dbReference>
<dbReference type="SMR" id="B1VAD2"/>
<dbReference type="STRING" id="59748.PA0571"/>
<dbReference type="KEGG" id="pal:PA0571"/>
<dbReference type="eggNOG" id="COG0256">
    <property type="taxonomic scope" value="Bacteria"/>
</dbReference>
<dbReference type="Proteomes" id="UP000008323">
    <property type="component" value="Chromosome"/>
</dbReference>
<dbReference type="GO" id="GO:0022625">
    <property type="term" value="C:cytosolic large ribosomal subunit"/>
    <property type="evidence" value="ECO:0007669"/>
    <property type="project" value="TreeGrafter"/>
</dbReference>
<dbReference type="GO" id="GO:0008097">
    <property type="term" value="F:5S rRNA binding"/>
    <property type="evidence" value="ECO:0007669"/>
    <property type="project" value="TreeGrafter"/>
</dbReference>
<dbReference type="GO" id="GO:0003735">
    <property type="term" value="F:structural constituent of ribosome"/>
    <property type="evidence" value="ECO:0007669"/>
    <property type="project" value="InterPro"/>
</dbReference>
<dbReference type="GO" id="GO:0006412">
    <property type="term" value="P:translation"/>
    <property type="evidence" value="ECO:0007669"/>
    <property type="project" value="UniProtKB-UniRule"/>
</dbReference>
<dbReference type="CDD" id="cd00432">
    <property type="entry name" value="Ribosomal_L18_L5e"/>
    <property type="match status" value="1"/>
</dbReference>
<dbReference type="FunFam" id="3.30.420.100:FF:000001">
    <property type="entry name" value="50S ribosomal protein L18"/>
    <property type="match status" value="1"/>
</dbReference>
<dbReference type="Gene3D" id="3.30.420.100">
    <property type="match status" value="1"/>
</dbReference>
<dbReference type="HAMAP" id="MF_01337_B">
    <property type="entry name" value="Ribosomal_uL18_B"/>
    <property type="match status" value="1"/>
</dbReference>
<dbReference type="InterPro" id="IPR004389">
    <property type="entry name" value="Ribosomal_uL18_bac-type"/>
</dbReference>
<dbReference type="InterPro" id="IPR005484">
    <property type="entry name" value="Ribosomal_uL18_bac/euk"/>
</dbReference>
<dbReference type="NCBIfam" id="TIGR00060">
    <property type="entry name" value="L18_bact"/>
    <property type="match status" value="1"/>
</dbReference>
<dbReference type="PANTHER" id="PTHR12899">
    <property type="entry name" value="39S RIBOSOMAL PROTEIN L18, MITOCHONDRIAL"/>
    <property type="match status" value="1"/>
</dbReference>
<dbReference type="PANTHER" id="PTHR12899:SF3">
    <property type="entry name" value="LARGE RIBOSOMAL SUBUNIT PROTEIN UL18M"/>
    <property type="match status" value="1"/>
</dbReference>
<dbReference type="Pfam" id="PF00861">
    <property type="entry name" value="Ribosomal_L18p"/>
    <property type="match status" value="1"/>
</dbReference>
<dbReference type="SUPFAM" id="SSF53137">
    <property type="entry name" value="Translational machinery components"/>
    <property type="match status" value="1"/>
</dbReference>
<evidence type="ECO:0000255" key="1">
    <source>
        <dbReference type="HAMAP-Rule" id="MF_01337"/>
    </source>
</evidence>
<evidence type="ECO:0000305" key="2"/>
<organism>
    <name type="scientific">Phytoplasma australiense</name>
    <dbReference type="NCBI Taxonomy" id="59748"/>
    <lineage>
        <taxon>Bacteria</taxon>
        <taxon>Bacillati</taxon>
        <taxon>Mycoplasmatota</taxon>
        <taxon>Mollicutes</taxon>
        <taxon>Acholeplasmatales</taxon>
        <taxon>Acholeplasmataceae</taxon>
        <taxon>Candidatus Phytoplasma</taxon>
        <taxon>16SrXII (Stolbur group)</taxon>
    </lineage>
</organism>
<accession>B1VAD2</accession>
<comment type="function">
    <text evidence="1">This is one of the proteins that bind and probably mediate the attachment of the 5S RNA into the large ribosomal subunit, where it forms part of the central protuberance.</text>
</comment>
<comment type="subunit">
    <text evidence="1">Part of the 50S ribosomal subunit; part of the 5S rRNA/L5/L18/L25 subcomplex. Contacts the 5S and 23S rRNAs.</text>
</comment>
<comment type="similarity">
    <text evidence="1">Belongs to the universal ribosomal protein uL18 family.</text>
</comment>
<protein>
    <recommendedName>
        <fullName evidence="1">Large ribosomal subunit protein uL18</fullName>
    </recommendedName>
    <alternativeName>
        <fullName evidence="2">50S ribosomal protein L18</fullName>
    </alternativeName>
</protein>
<feature type="chain" id="PRO_1000142698" description="Large ribosomal subunit protein uL18">
    <location>
        <begin position="1"/>
        <end position="117"/>
    </location>
</feature>
<keyword id="KW-1185">Reference proteome</keyword>
<keyword id="KW-0687">Ribonucleoprotein</keyword>
<keyword id="KW-0689">Ribosomal protein</keyword>
<keyword id="KW-0694">RNA-binding</keyword>
<keyword id="KW-0699">rRNA-binding</keyword>
<sequence>MIIKQSSNVLRKKRHLRLRKIIIGTITRPRLNIFRSNKFIYVQLIDDNAQNTLCSVHSKETNVIGSNIKAAQAVGTLIAQKALALGIKNIVFDRSGYLYHGKIKALAEACRQSGLQF</sequence>
<proteinExistence type="inferred from homology"/>
<gene>
    <name evidence="1" type="primary">rplR</name>
    <name type="ordered locus">PA0571</name>
</gene>